<sequence length="463" mass="49361">MSDTVIIAGGGPVGLMLACELGLAGVDTVVLERHDAPREPSRGGAINATVVELFTQRGIMESLRDDGFEFRMAHFAHIPLAPERVPGDRAFSFAVPHAQVERRLEERARSLGVRVRRSTEITSVRQTPDGVQVTTGDGEVVEGAYLVGCDGSASLVREQAGIPFPGVDPDFHGLWGDIKVEPGAPVLERIGARQYELGLCMVAPIGPDTVRVITGEFDVPSPPADQEVGFDELRAAVARIAGVELDGVPGWLSRWTATSRQAERYREGRILLAGDAAHTLFPLGGQALGTGIEDAVNLGWKLAATVQGWAPPSLLDSYHEERHAAGARACASTRAQTTIMRSLARVGELRALLTELAGLEEVNAYLVRMVGGIDGSRLPDVPLVTAEGETSVYRLLEAGRGVLLDLGAGLPAVRHPQVTYVRAEPTNRLDATAVLLRPDGVVAWRAPQDGLEAALETWFGPAA</sequence>
<comment type="function">
    <text evidence="1 2">Involved in the biosynthesis of the spirotetramate antibiotics pyrroindomycins. Catalyzes the intramolecular cyclization forming the dialkyldecalin moiety in pyrroindomycins, via an endo-selective [4+2] cycloaddition reaction.</text>
</comment>
<comment type="catalytic activity">
    <reaction evidence="1">
        <text>4-[(2E,7S,8E,10E,13R,14R,16E,18E)-14-ethyl-7,13-dihydroxy-2,16,18-trimethylicosa-2,8,10,16,18-pentaenoyl]-2-methylidene-5-oxo-2,5-dihydro-1H-pyrrol-3-olate = 4-[(1R,2R,4aS,5S,8aR)-2-[(2R,3R,5E,7E)-3-ethyl-2-hydroxy-5,7-dimethylnona-5,7-dien-1-yl]-5-hydroxy-1-methyl-1,2,4a,5,6,7,8,8a-octahydronaphthalene-1-carbonyl]-2-methylidene-5-oxo-2,5-dihydro-1H-pyrrol-3-olate</text>
        <dbReference type="Rhea" id="RHEA:64476"/>
        <dbReference type="ChEBI" id="CHEBI:155854"/>
        <dbReference type="ChEBI" id="CHEBI:155855"/>
    </reaction>
    <physiologicalReaction direction="left-to-right" evidence="1">
        <dbReference type="Rhea" id="RHEA:64477"/>
    </physiologicalReaction>
</comment>
<comment type="cofactor">
    <cofactor evidence="1 2">
        <name>FAD</name>
        <dbReference type="ChEBI" id="CHEBI:57692"/>
    </cofactor>
    <text evidence="2">Binds 1 FAD per subunit. The FAD cofactor does not cycle between oxidized and reduced forms and therefore does not have a typical redox role in the reaction; it plays a structural role essential for PyrE3 catalysis, to maintain the requisite geometry of the protein and position the 1,3-diene and dienophile groups through specific interactions with the substrate.</text>
</comment>
<comment type="biophysicochemical properties">
    <kinetics>
        <KM evidence="1">51.5 uM for 4-[(2E,7S,8E,10E,13R,14R,16E,18E)-14-ethyl-7,13-dihydroxy-2,16,18-trimethylicosa-2,8,10,16,18-pentaenoyl]-2-methylidene-5-oxo-2,5-dihydro-1H-pyrrol-3-olate</KM>
        <text evidence="1">kcat is 223.2 min(-1).</text>
    </kinetics>
</comment>
<comment type="pathway">
    <text evidence="1">Antibiotic biosynthesis.</text>
</comment>
<comment type="subunit">
    <text evidence="2">Homodimer.</text>
</comment>
<comment type="disruption phenotype">
    <text evidence="1">Cells lacking this gene lose the ability to produce pyrroindomycins.</text>
</comment>
<comment type="similarity">
    <text evidence="5">Belongs to the PheA/TfdB FAD monooxygenase family.</text>
</comment>
<comment type="sequence caution" evidence="6">
    <conflict type="erroneous initiation">
        <sequence resource="EMBL-CDS" id="AFV71312"/>
    </conflict>
    <text>Truncated N-terminus.</text>
</comment>
<protein>
    <recommendedName>
        <fullName evidence="3">Dialkyldecalin synthase</fullName>
        <ecNumber evidence="1">5.5.1.-</ecNumber>
    </recommendedName>
    <alternativeName>
        <fullName evidence="4">FAD-dependent [4+2] cyclase</fullName>
    </alternativeName>
</protein>
<keyword id="KW-0002">3D-structure</keyword>
<keyword id="KW-0045">Antibiotic biosynthesis</keyword>
<keyword id="KW-0274">FAD</keyword>
<keyword id="KW-0285">Flavoprotein</keyword>
<keyword id="KW-0413">Isomerase</keyword>
<feature type="chain" id="PRO_0000450858" description="Dialkyldecalin synthase">
    <location>
        <begin position="1"/>
        <end position="463"/>
    </location>
</feature>
<feature type="binding site" evidence="2 8">
    <location>
        <position position="13"/>
    </location>
    <ligand>
        <name>FAD</name>
        <dbReference type="ChEBI" id="CHEBI:57692"/>
    </ligand>
</feature>
<feature type="binding site" evidence="2 8">
    <location>
        <begin position="32"/>
        <end position="33"/>
    </location>
    <ligand>
        <name>FAD</name>
        <dbReference type="ChEBI" id="CHEBI:57692"/>
    </ligand>
</feature>
<feature type="binding site" evidence="2 8">
    <location>
        <position position="121"/>
    </location>
    <ligand>
        <name>FAD</name>
        <dbReference type="ChEBI" id="CHEBI:57692"/>
    </ligand>
</feature>
<feature type="binding site" evidence="2 8">
    <location>
        <position position="275"/>
    </location>
    <ligand>
        <name>FAD</name>
        <dbReference type="ChEBI" id="CHEBI:57692"/>
    </ligand>
</feature>
<feature type="mutagenesis site" description="Loss of catalytic activity. Loss of FAD binding." evidence="1">
    <original>E</original>
    <variation>A</variation>
    <location>
        <position position="32"/>
    </location>
</feature>
<feature type="mutagenesis site" description="81% loss of catalytic efficiency." evidence="2">
    <original>H</original>
    <variation>A</variation>
    <location>
        <position position="74"/>
    </location>
</feature>
<feature type="mutagenesis site" description="Loss of catalytic activity. Loss of FAD binding." evidence="1">
    <original>D</original>
    <variation>A</variation>
    <location>
        <position position="275"/>
    </location>
</feature>
<feature type="helix" evidence="9">
    <location>
        <begin position="16"/>
        <end position="23"/>
    </location>
</feature>
<feature type="strand" evidence="9">
    <location>
        <begin position="28"/>
        <end position="31"/>
    </location>
</feature>
<feature type="strand" evidence="9">
    <location>
        <begin position="33"/>
        <end position="36"/>
    </location>
</feature>
<feature type="helix" evidence="9">
    <location>
        <begin position="48"/>
        <end position="55"/>
    </location>
</feature>
<feature type="turn" evidence="9">
    <location>
        <begin position="56"/>
        <end position="58"/>
    </location>
</feature>
<feature type="helix" evidence="9">
    <location>
        <begin position="59"/>
        <end position="63"/>
    </location>
</feature>
<feature type="turn" evidence="9">
    <location>
        <begin position="64"/>
        <end position="66"/>
    </location>
</feature>
<feature type="strand" evidence="9">
    <location>
        <begin position="68"/>
        <end position="70"/>
    </location>
</feature>
<feature type="helix" evidence="9">
    <location>
        <begin position="82"/>
        <end position="84"/>
    </location>
</feature>
<feature type="strand" evidence="9">
    <location>
        <begin position="92"/>
        <end position="94"/>
    </location>
</feature>
<feature type="helix" evidence="9">
    <location>
        <begin position="97"/>
        <end position="110"/>
    </location>
</feature>
<feature type="strand" evidence="9">
    <location>
        <begin position="114"/>
        <end position="116"/>
    </location>
</feature>
<feature type="strand" evidence="9">
    <location>
        <begin position="121"/>
        <end position="127"/>
    </location>
</feature>
<feature type="strand" evidence="9">
    <location>
        <begin position="130"/>
        <end position="135"/>
    </location>
</feature>
<feature type="strand" evidence="9">
    <location>
        <begin position="140"/>
        <end position="148"/>
    </location>
</feature>
<feature type="helix" evidence="9">
    <location>
        <begin position="155"/>
        <end position="159"/>
    </location>
</feature>
<feature type="strand" evidence="9">
    <location>
        <begin position="171"/>
        <end position="179"/>
    </location>
</feature>
<feature type="helix" evidence="9">
    <location>
        <begin position="185"/>
        <end position="189"/>
    </location>
</feature>
<feature type="strand" evidence="9">
    <location>
        <begin position="191"/>
        <end position="194"/>
    </location>
</feature>
<feature type="strand" evidence="9">
    <location>
        <begin position="196"/>
        <end position="206"/>
    </location>
</feature>
<feature type="strand" evidence="9">
    <location>
        <begin position="209"/>
        <end position="219"/>
    </location>
</feature>
<feature type="helix" evidence="9">
    <location>
        <begin position="230"/>
        <end position="241"/>
    </location>
</feature>
<feature type="strand" evidence="9">
    <location>
        <begin position="247"/>
        <end position="255"/>
    </location>
</feature>
<feature type="strand" evidence="9">
    <location>
        <begin position="259"/>
        <end position="261"/>
    </location>
</feature>
<feature type="strand" evidence="9">
    <location>
        <begin position="265"/>
        <end position="267"/>
    </location>
</feature>
<feature type="strand" evidence="9">
    <location>
        <begin position="270"/>
        <end position="272"/>
    </location>
</feature>
<feature type="helix" evidence="9">
    <location>
        <begin position="274"/>
        <end position="276"/>
    </location>
</feature>
<feature type="helix" evidence="9">
    <location>
        <begin position="286"/>
        <end position="306"/>
    </location>
</feature>
<feature type="helix" evidence="9">
    <location>
        <begin position="314"/>
        <end position="338"/>
    </location>
</feature>
<feature type="helix" evidence="9">
    <location>
        <begin position="343"/>
        <end position="356"/>
    </location>
</feature>
<feature type="helix" evidence="9">
    <location>
        <begin position="360"/>
        <end position="370"/>
    </location>
</feature>
<feature type="strand" evidence="9">
    <location>
        <begin position="382"/>
        <end position="385"/>
    </location>
</feature>
<feature type="strand" evidence="9">
    <location>
        <begin position="388"/>
        <end position="391"/>
    </location>
</feature>
<feature type="helix" evidence="9">
    <location>
        <begin position="392"/>
        <end position="396"/>
    </location>
</feature>
<feature type="strand" evidence="9">
    <location>
        <begin position="400"/>
        <end position="407"/>
    </location>
</feature>
<feature type="strand" evidence="9">
    <location>
        <begin position="418"/>
        <end position="423"/>
    </location>
</feature>
<feature type="strand" evidence="9">
    <location>
        <begin position="432"/>
        <end position="436"/>
    </location>
</feature>
<feature type="strand" evidence="9">
    <location>
        <begin position="440"/>
        <end position="445"/>
    </location>
</feature>
<feature type="helix" evidence="9">
    <location>
        <begin position="451"/>
        <end position="459"/>
    </location>
</feature>
<reference key="1">
    <citation type="journal article" date="2012" name="J. Am. Chem. Soc.">
        <title>Insights into pyrroindomycin biosynthesis reveal a uniform paradigm for tetramate/tetronate formation.</title>
        <authorList>
            <person name="Wu Q."/>
            <person name="Wu Z."/>
            <person name="Qu X."/>
            <person name="Liu W."/>
        </authorList>
    </citation>
    <scope>NUCLEOTIDE SEQUENCE [GENOMIC DNA]</scope>
    <source>
        <strain>NRRL 21084</strain>
    </source>
</reference>
<reference key="2">
    <citation type="journal article" date="2015" name="Nat. Chem. Biol.">
        <title>An enzymatic [4+2] cyclization cascade creates the pentacyclic core of pyrroindomycins.</title>
        <authorList>
            <person name="Tian Z."/>
            <person name="Sun P."/>
            <person name="Yan Y."/>
            <person name="Wu Z."/>
            <person name="Zheng Q."/>
            <person name="Zhou S."/>
            <person name="Zhang H."/>
            <person name="Yu F."/>
            <person name="Jia X."/>
            <person name="Chen D."/>
            <person name="Mandi A."/>
            <person name="Kurtan T."/>
            <person name="Liu W."/>
        </authorList>
    </citation>
    <scope>FUNCTION</scope>
    <scope>CATALYTIC ACTIVITY</scope>
    <scope>COFACTOR</scope>
    <scope>BIOPHYSICOCHEMICAL PROPERTIES</scope>
    <scope>DISRUPTION PHENOTYPE</scope>
    <scope>PATHWAY</scope>
    <scope>REEXAMINATION OF THE N-TERMINAL SEQUENCE</scope>
    <scope>MUTAGENESIS OF GLU-32 AND ASP-275</scope>
    <scope>REACTION MECHANISM</scope>
</reference>
<reference evidence="8" key="3">
    <citation type="journal article" date="2018" name="Cell Chem. Biol.">
        <title>Structural Insights into a Flavin-Dependent [4+2] Cyclase that Catalyzes trans-Decalin Formation in Pyrroindomycin Biosynthesis.</title>
        <authorList>
            <person name="Zheng Q."/>
            <person name="Gong Y."/>
            <person name="Guo Y."/>
            <person name="Zhao Z."/>
            <person name="Wu Z."/>
            <person name="Zhou Z."/>
            <person name="Chen D."/>
            <person name="Pan L."/>
            <person name="Liu W."/>
        </authorList>
    </citation>
    <scope>X-RAY CRYSTALLOGRAPHY (2.10 ANGSTROMS) IN COMPLEX WITH FAD</scope>
    <scope>FUNCTION</scope>
    <scope>COFACTOR</scope>
    <scope>SUBUNIT</scope>
    <scope>MUTAGENESIS OF HIS-74</scope>
</reference>
<dbReference type="EC" id="5.5.1.-" evidence="1"/>
<dbReference type="EMBL" id="JX042309">
    <property type="protein sequence ID" value="AFV71312.1"/>
    <property type="status" value="ALT_INIT"/>
    <property type="molecule type" value="Genomic_DNA"/>
</dbReference>
<dbReference type="PDB" id="5XGV">
    <property type="method" value="X-ray"/>
    <property type="resolution" value="2.10 A"/>
    <property type="chains" value="A/B=1-463"/>
</dbReference>
<dbReference type="PDBsum" id="5XGV"/>
<dbReference type="SMR" id="K7QRJ5"/>
<dbReference type="GO" id="GO:0071949">
    <property type="term" value="F:FAD binding"/>
    <property type="evidence" value="ECO:0007669"/>
    <property type="project" value="InterPro"/>
</dbReference>
<dbReference type="GO" id="GO:0016853">
    <property type="term" value="F:isomerase activity"/>
    <property type="evidence" value="ECO:0007669"/>
    <property type="project" value="UniProtKB-KW"/>
</dbReference>
<dbReference type="GO" id="GO:0016709">
    <property type="term" value="F:oxidoreductase activity, acting on paired donors, with incorporation or reduction of molecular oxygen, NAD(P)H as one donor, and incorporation of one atom of oxygen"/>
    <property type="evidence" value="ECO:0007669"/>
    <property type="project" value="UniProtKB-ARBA"/>
</dbReference>
<dbReference type="GO" id="GO:0017000">
    <property type="term" value="P:antibiotic biosynthetic process"/>
    <property type="evidence" value="ECO:0007669"/>
    <property type="project" value="UniProtKB-KW"/>
</dbReference>
<dbReference type="Gene3D" id="3.40.30.120">
    <property type="match status" value="1"/>
</dbReference>
<dbReference type="Gene3D" id="3.50.50.60">
    <property type="entry name" value="FAD/NAD(P)-binding domain"/>
    <property type="match status" value="2"/>
</dbReference>
<dbReference type="InterPro" id="IPR002938">
    <property type="entry name" value="FAD-bd"/>
</dbReference>
<dbReference type="InterPro" id="IPR036188">
    <property type="entry name" value="FAD/NAD-bd_sf"/>
</dbReference>
<dbReference type="InterPro" id="IPR050641">
    <property type="entry name" value="RIFMO-like"/>
</dbReference>
<dbReference type="PANTHER" id="PTHR43004:SF19">
    <property type="entry name" value="BINDING MONOOXYGENASE, PUTATIVE (JCVI)-RELATED"/>
    <property type="match status" value="1"/>
</dbReference>
<dbReference type="PANTHER" id="PTHR43004">
    <property type="entry name" value="TRK SYSTEM POTASSIUM UPTAKE PROTEIN"/>
    <property type="match status" value="1"/>
</dbReference>
<dbReference type="Pfam" id="PF01494">
    <property type="entry name" value="FAD_binding_3"/>
    <property type="match status" value="1"/>
</dbReference>
<dbReference type="Pfam" id="PF21274">
    <property type="entry name" value="Rng_hyd_C"/>
    <property type="match status" value="1"/>
</dbReference>
<dbReference type="PRINTS" id="PR00420">
    <property type="entry name" value="RNGMNOXGNASE"/>
</dbReference>
<dbReference type="SUPFAM" id="SSF51905">
    <property type="entry name" value="FAD/NAD(P)-binding domain"/>
    <property type="match status" value="1"/>
</dbReference>
<accession>K7QRJ5</accession>
<proteinExistence type="evidence at protein level"/>
<organism>
    <name type="scientific">Streptomyces rugosporus</name>
    <dbReference type="NCBI Taxonomy" id="295838"/>
    <lineage>
        <taxon>Bacteria</taxon>
        <taxon>Bacillati</taxon>
        <taxon>Actinomycetota</taxon>
        <taxon>Actinomycetes</taxon>
        <taxon>Kitasatosporales</taxon>
        <taxon>Streptomycetaceae</taxon>
        <taxon>Streptomyces</taxon>
    </lineage>
</organism>
<evidence type="ECO:0000269" key="1">
    <source>
    </source>
</evidence>
<evidence type="ECO:0000269" key="2">
    <source>
    </source>
</evidence>
<evidence type="ECO:0000303" key="3">
    <source>
    </source>
</evidence>
<evidence type="ECO:0000303" key="4">
    <source>
    </source>
</evidence>
<evidence type="ECO:0000305" key="5"/>
<evidence type="ECO:0000305" key="6">
    <source>
    </source>
</evidence>
<evidence type="ECO:0000312" key="7">
    <source>
        <dbReference type="EMBL" id="AFV71312.1"/>
    </source>
</evidence>
<evidence type="ECO:0007744" key="8">
    <source>
        <dbReference type="PDB" id="5XGV"/>
    </source>
</evidence>
<evidence type="ECO:0007829" key="9">
    <source>
        <dbReference type="PDB" id="5XGV"/>
    </source>
</evidence>
<name>PYRE3_STRRG</name>
<gene>
    <name evidence="7" type="primary">pyrE3</name>
</gene>